<protein>
    <recommendedName>
        <fullName evidence="1">Large ribosomal subunit protein bL17</fullName>
    </recommendedName>
    <alternativeName>
        <fullName evidence="3">50S ribosomal protein L17</fullName>
    </alternativeName>
</protein>
<organism>
    <name type="scientific">Opitutus terrae (strain DSM 11246 / JCM 15787 / PB90-1)</name>
    <dbReference type="NCBI Taxonomy" id="452637"/>
    <lineage>
        <taxon>Bacteria</taxon>
        <taxon>Pseudomonadati</taxon>
        <taxon>Verrucomicrobiota</taxon>
        <taxon>Opitutia</taxon>
        <taxon>Opitutales</taxon>
        <taxon>Opitutaceae</taxon>
        <taxon>Opitutus</taxon>
    </lineage>
</organism>
<sequence length="171" mass="18666">MRHNKHRASLGVTVEHRRAMLSNLAAALITHGRIETTLVKAKALRPFVEKVITKAKQAAAKTDKKDALHLRRLAQSDVRDETAVTKLFNETYKEFANRNGGYTRIYKLGPQRIGDAAEMALIEFVKADDPGYKKSKGKKATKAKGKKAKATPAAEAAAAATTEAAPAEEKK</sequence>
<reference key="1">
    <citation type="journal article" date="2011" name="J. Bacteriol.">
        <title>Genome sequence of the verrucomicrobium Opitutus terrae PB90-1, an abundant inhabitant of rice paddy soil ecosystems.</title>
        <authorList>
            <person name="van Passel M.W."/>
            <person name="Kant R."/>
            <person name="Palva A."/>
            <person name="Copeland A."/>
            <person name="Lucas S."/>
            <person name="Lapidus A."/>
            <person name="Glavina del Rio T."/>
            <person name="Pitluck S."/>
            <person name="Goltsman E."/>
            <person name="Clum A."/>
            <person name="Sun H."/>
            <person name="Schmutz J."/>
            <person name="Larimer F.W."/>
            <person name="Land M.L."/>
            <person name="Hauser L."/>
            <person name="Kyrpides N."/>
            <person name="Mikhailova N."/>
            <person name="Richardson P.P."/>
            <person name="Janssen P.H."/>
            <person name="de Vos W.M."/>
            <person name="Smidt H."/>
        </authorList>
    </citation>
    <scope>NUCLEOTIDE SEQUENCE [LARGE SCALE GENOMIC DNA]</scope>
    <source>
        <strain>DSM 11246 / JCM 15787 / PB90-1</strain>
    </source>
</reference>
<keyword id="KW-1185">Reference proteome</keyword>
<keyword id="KW-0687">Ribonucleoprotein</keyword>
<keyword id="KW-0689">Ribosomal protein</keyword>
<evidence type="ECO:0000255" key="1">
    <source>
        <dbReference type="HAMAP-Rule" id="MF_01368"/>
    </source>
</evidence>
<evidence type="ECO:0000256" key="2">
    <source>
        <dbReference type="SAM" id="MobiDB-lite"/>
    </source>
</evidence>
<evidence type="ECO:0000305" key="3"/>
<gene>
    <name evidence="1" type="primary">rplQ</name>
    <name type="ordered locus">Oter_0200</name>
</gene>
<name>RL17_OPITP</name>
<feature type="chain" id="PRO_1000144458" description="Large ribosomal subunit protein bL17">
    <location>
        <begin position="1"/>
        <end position="171"/>
    </location>
</feature>
<feature type="region of interest" description="Disordered" evidence="2">
    <location>
        <begin position="130"/>
        <end position="171"/>
    </location>
</feature>
<feature type="compositionally biased region" description="Basic residues" evidence="2">
    <location>
        <begin position="133"/>
        <end position="149"/>
    </location>
</feature>
<feature type="compositionally biased region" description="Low complexity" evidence="2">
    <location>
        <begin position="150"/>
        <end position="165"/>
    </location>
</feature>
<dbReference type="EMBL" id="CP001032">
    <property type="protein sequence ID" value="ACB73491.1"/>
    <property type="molecule type" value="Genomic_DNA"/>
</dbReference>
<dbReference type="RefSeq" id="WP_012373029.1">
    <property type="nucleotide sequence ID" value="NC_010571.1"/>
</dbReference>
<dbReference type="SMR" id="B1ZNC2"/>
<dbReference type="STRING" id="452637.Oter_0200"/>
<dbReference type="KEGG" id="ote:Oter_0200"/>
<dbReference type="eggNOG" id="COG0203">
    <property type="taxonomic scope" value="Bacteria"/>
</dbReference>
<dbReference type="HOGENOM" id="CLU_074407_0_1_0"/>
<dbReference type="OrthoDB" id="9809073at2"/>
<dbReference type="Proteomes" id="UP000007013">
    <property type="component" value="Chromosome"/>
</dbReference>
<dbReference type="GO" id="GO:0022625">
    <property type="term" value="C:cytosolic large ribosomal subunit"/>
    <property type="evidence" value="ECO:0007669"/>
    <property type="project" value="TreeGrafter"/>
</dbReference>
<dbReference type="GO" id="GO:0003735">
    <property type="term" value="F:structural constituent of ribosome"/>
    <property type="evidence" value="ECO:0007669"/>
    <property type="project" value="InterPro"/>
</dbReference>
<dbReference type="GO" id="GO:0006412">
    <property type="term" value="P:translation"/>
    <property type="evidence" value="ECO:0007669"/>
    <property type="project" value="UniProtKB-UniRule"/>
</dbReference>
<dbReference type="Gene3D" id="3.90.1030.10">
    <property type="entry name" value="Ribosomal protein L17"/>
    <property type="match status" value="1"/>
</dbReference>
<dbReference type="HAMAP" id="MF_01368">
    <property type="entry name" value="Ribosomal_bL17"/>
    <property type="match status" value="1"/>
</dbReference>
<dbReference type="InterPro" id="IPR000456">
    <property type="entry name" value="Ribosomal_bL17"/>
</dbReference>
<dbReference type="InterPro" id="IPR047859">
    <property type="entry name" value="Ribosomal_bL17_CS"/>
</dbReference>
<dbReference type="InterPro" id="IPR036373">
    <property type="entry name" value="Ribosomal_bL17_sf"/>
</dbReference>
<dbReference type="NCBIfam" id="TIGR00059">
    <property type="entry name" value="L17"/>
    <property type="match status" value="1"/>
</dbReference>
<dbReference type="PANTHER" id="PTHR14413:SF16">
    <property type="entry name" value="LARGE RIBOSOMAL SUBUNIT PROTEIN BL17M"/>
    <property type="match status" value="1"/>
</dbReference>
<dbReference type="PANTHER" id="PTHR14413">
    <property type="entry name" value="RIBOSOMAL PROTEIN L17"/>
    <property type="match status" value="1"/>
</dbReference>
<dbReference type="Pfam" id="PF01196">
    <property type="entry name" value="Ribosomal_L17"/>
    <property type="match status" value="1"/>
</dbReference>
<dbReference type="SUPFAM" id="SSF64263">
    <property type="entry name" value="Prokaryotic ribosomal protein L17"/>
    <property type="match status" value="1"/>
</dbReference>
<dbReference type="PROSITE" id="PS01167">
    <property type="entry name" value="RIBOSOMAL_L17"/>
    <property type="match status" value="1"/>
</dbReference>
<proteinExistence type="inferred from homology"/>
<accession>B1ZNC2</accession>
<comment type="subunit">
    <text evidence="1">Part of the 50S ribosomal subunit. Contacts protein L32.</text>
</comment>
<comment type="similarity">
    <text evidence="1">Belongs to the bacterial ribosomal protein bL17 family.</text>
</comment>